<feature type="chain" id="PRO_0000288235" description="tRNA (guanine-N(7)-)-methyltransferase">
    <location>
        <begin position="1"/>
        <end position="211"/>
    </location>
</feature>
<feature type="region of interest" description="Interaction with RNA" evidence="2">
    <location>
        <begin position="124"/>
        <end position="129"/>
    </location>
</feature>
<feature type="active site" evidence="1">
    <location>
        <position position="118"/>
    </location>
</feature>
<feature type="binding site" evidence="2">
    <location>
        <position position="44"/>
    </location>
    <ligand>
        <name>S-adenosyl-L-methionine</name>
        <dbReference type="ChEBI" id="CHEBI:59789"/>
    </ligand>
</feature>
<feature type="binding site" evidence="2">
    <location>
        <position position="69"/>
    </location>
    <ligand>
        <name>S-adenosyl-L-methionine</name>
        <dbReference type="ChEBI" id="CHEBI:59789"/>
    </ligand>
</feature>
<feature type="binding site" evidence="2">
    <location>
        <position position="96"/>
    </location>
    <ligand>
        <name>S-adenosyl-L-methionine</name>
        <dbReference type="ChEBI" id="CHEBI:59789"/>
    </ligand>
</feature>
<feature type="binding site" evidence="2">
    <location>
        <position position="118"/>
    </location>
    <ligand>
        <name>S-adenosyl-L-methionine</name>
        <dbReference type="ChEBI" id="CHEBI:59789"/>
    </ligand>
</feature>
<feature type="binding site" evidence="2">
    <location>
        <position position="122"/>
    </location>
    <ligand>
        <name>substrate</name>
    </ligand>
</feature>
<feature type="binding site" evidence="2">
    <location>
        <position position="154"/>
    </location>
    <ligand>
        <name>substrate</name>
    </ligand>
</feature>
<feature type="binding site" evidence="2">
    <location>
        <begin position="191"/>
        <end position="194"/>
    </location>
    <ligand>
        <name>substrate</name>
    </ligand>
</feature>
<comment type="function">
    <text evidence="2">Catalyzes the formation of N(7)-methylguanine at position 46 (m7G46) in tRNA.</text>
</comment>
<comment type="catalytic activity">
    <reaction evidence="2">
        <text>guanosine(46) in tRNA + S-adenosyl-L-methionine = N(7)-methylguanosine(46) in tRNA + S-adenosyl-L-homocysteine</text>
        <dbReference type="Rhea" id="RHEA:42708"/>
        <dbReference type="Rhea" id="RHEA-COMP:10188"/>
        <dbReference type="Rhea" id="RHEA-COMP:10189"/>
        <dbReference type="ChEBI" id="CHEBI:57856"/>
        <dbReference type="ChEBI" id="CHEBI:59789"/>
        <dbReference type="ChEBI" id="CHEBI:74269"/>
        <dbReference type="ChEBI" id="CHEBI:74480"/>
        <dbReference type="EC" id="2.1.1.33"/>
    </reaction>
</comment>
<comment type="pathway">
    <text evidence="2">tRNA modification; N(7)-methylguanine-tRNA biosynthesis.</text>
</comment>
<comment type="similarity">
    <text evidence="2">Belongs to the class I-like SAM-binding methyltransferase superfamily. TrmB family.</text>
</comment>
<dbReference type="EC" id="2.1.1.33" evidence="2"/>
<dbReference type="EMBL" id="CP000261">
    <property type="protein sequence ID" value="ABF36545.1"/>
    <property type="molecule type" value="Genomic_DNA"/>
</dbReference>
<dbReference type="SMR" id="Q1JAB6"/>
<dbReference type="KEGG" id="spj:MGAS2096_Spy1493"/>
<dbReference type="HOGENOM" id="CLU_050910_2_1_9"/>
<dbReference type="UniPathway" id="UPA00989"/>
<dbReference type="GO" id="GO:0043527">
    <property type="term" value="C:tRNA methyltransferase complex"/>
    <property type="evidence" value="ECO:0007669"/>
    <property type="project" value="TreeGrafter"/>
</dbReference>
<dbReference type="GO" id="GO:0008176">
    <property type="term" value="F:tRNA (guanine(46)-N7)-methyltransferase activity"/>
    <property type="evidence" value="ECO:0007669"/>
    <property type="project" value="UniProtKB-UniRule"/>
</dbReference>
<dbReference type="CDD" id="cd02440">
    <property type="entry name" value="AdoMet_MTases"/>
    <property type="match status" value="1"/>
</dbReference>
<dbReference type="FunFam" id="3.40.50.150:FF:000035">
    <property type="entry name" value="tRNA (guanine-N(7)-)-methyltransferase"/>
    <property type="match status" value="1"/>
</dbReference>
<dbReference type="Gene3D" id="3.40.50.150">
    <property type="entry name" value="Vaccinia Virus protein VP39"/>
    <property type="match status" value="1"/>
</dbReference>
<dbReference type="HAMAP" id="MF_01057">
    <property type="entry name" value="tRNA_methyltr_TrmB"/>
    <property type="match status" value="1"/>
</dbReference>
<dbReference type="InterPro" id="IPR029063">
    <property type="entry name" value="SAM-dependent_MTases_sf"/>
</dbReference>
<dbReference type="InterPro" id="IPR003358">
    <property type="entry name" value="tRNA_(Gua-N-7)_MeTrfase_Trmb"/>
</dbReference>
<dbReference type="InterPro" id="IPR055361">
    <property type="entry name" value="tRNA_methyltr_TrmB_bact"/>
</dbReference>
<dbReference type="NCBIfam" id="NF001080">
    <property type="entry name" value="PRK00121.2-2"/>
    <property type="match status" value="1"/>
</dbReference>
<dbReference type="NCBIfam" id="TIGR00091">
    <property type="entry name" value="tRNA (guanosine(46)-N7)-methyltransferase TrmB"/>
    <property type="match status" value="1"/>
</dbReference>
<dbReference type="PANTHER" id="PTHR23417">
    <property type="entry name" value="3-DEOXY-D-MANNO-OCTULOSONIC-ACID TRANSFERASE/TRNA GUANINE-N 7 - -METHYLTRANSFERASE"/>
    <property type="match status" value="1"/>
</dbReference>
<dbReference type="PANTHER" id="PTHR23417:SF14">
    <property type="entry name" value="PENTACOTRIPEPTIDE-REPEAT REGION OF PRORP DOMAIN-CONTAINING PROTEIN"/>
    <property type="match status" value="1"/>
</dbReference>
<dbReference type="Pfam" id="PF02390">
    <property type="entry name" value="Methyltransf_4"/>
    <property type="match status" value="1"/>
</dbReference>
<dbReference type="SUPFAM" id="SSF53335">
    <property type="entry name" value="S-adenosyl-L-methionine-dependent methyltransferases"/>
    <property type="match status" value="1"/>
</dbReference>
<dbReference type="PROSITE" id="PS51625">
    <property type="entry name" value="SAM_MT_TRMB"/>
    <property type="match status" value="1"/>
</dbReference>
<sequence>MRVRKRKGAEEHLANNPHYVILNPEDAKGRWHDVFGNDRPIHIEVGSGKGGFITGMALKNPDINYIGIDIQLSVLSYALDKVLASEVPNVKLLRVDGSSLTNYFEDGEVDMMYLNFSDPWPKTKHEKRRLTYKDFLDTYKRILPEHGEIHFKTDNRGLFEYSLASFSQYGMTLRQIWLDLHASNYEGNVMTEYEEKFSNKGQVIYRVEANF</sequence>
<name>TRMB_STRPB</name>
<keyword id="KW-0489">Methyltransferase</keyword>
<keyword id="KW-0949">S-adenosyl-L-methionine</keyword>
<keyword id="KW-0808">Transferase</keyword>
<keyword id="KW-0819">tRNA processing</keyword>
<reference key="1">
    <citation type="journal article" date="2006" name="Proc. Natl. Acad. Sci. U.S.A.">
        <title>Molecular genetic anatomy of inter- and intraserotype variation in the human bacterial pathogen group A Streptococcus.</title>
        <authorList>
            <person name="Beres S.B."/>
            <person name="Richter E.W."/>
            <person name="Nagiec M.J."/>
            <person name="Sumby P."/>
            <person name="Porcella S.F."/>
            <person name="DeLeo F.R."/>
            <person name="Musser J.M."/>
        </authorList>
    </citation>
    <scope>NUCLEOTIDE SEQUENCE [LARGE SCALE GENOMIC DNA]</scope>
    <source>
        <strain>MGAS2096</strain>
    </source>
</reference>
<proteinExistence type="inferred from homology"/>
<gene>
    <name evidence="2" type="primary">trmB</name>
    <name type="ordered locus">MGAS2096_Spy1493</name>
</gene>
<organism>
    <name type="scientific">Streptococcus pyogenes serotype M12 (strain MGAS2096)</name>
    <dbReference type="NCBI Taxonomy" id="370553"/>
    <lineage>
        <taxon>Bacteria</taxon>
        <taxon>Bacillati</taxon>
        <taxon>Bacillota</taxon>
        <taxon>Bacilli</taxon>
        <taxon>Lactobacillales</taxon>
        <taxon>Streptococcaceae</taxon>
        <taxon>Streptococcus</taxon>
    </lineage>
</organism>
<accession>Q1JAB6</accession>
<protein>
    <recommendedName>
        <fullName evidence="2">tRNA (guanine-N(7)-)-methyltransferase</fullName>
        <ecNumber evidence="2">2.1.1.33</ecNumber>
    </recommendedName>
    <alternativeName>
        <fullName evidence="2">tRNA (guanine(46)-N(7))-methyltransferase</fullName>
    </alternativeName>
    <alternativeName>
        <fullName evidence="2">tRNA(m7G46)-methyltransferase</fullName>
    </alternativeName>
</protein>
<evidence type="ECO:0000250" key="1"/>
<evidence type="ECO:0000255" key="2">
    <source>
        <dbReference type="HAMAP-Rule" id="MF_01057"/>
    </source>
</evidence>